<protein>
    <recommendedName>
        <fullName evidence="1">ATP synthase subunit beta</fullName>
        <ecNumber evidence="1">7.1.2.2</ecNumber>
    </recommendedName>
    <alternativeName>
        <fullName evidence="1">ATP synthase F1 sector subunit beta</fullName>
    </alternativeName>
    <alternativeName>
        <fullName evidence="1">F-ATPase subunit beta</fullName>
    </alternativeName>
</protein>
<proteinExistence type="inferred from homology"/>
<dbReference type="EC" id="7.1.2.2" evidence="1"/>
<dbReference type="EMBL" id="M20255">
    <property type="protein sequence ID" value="AAA82526.1"/>
    <property type="molecule type" value="Genomic_DNA"/>
</dbReference>
<dbReference type="EMBL" id="CP001983">
    <property type="protein sequence ID" value="ADE72126.1"/>
    <property type="molecule type" value="Genomic_DNA"/>
</dbReference>
<dbReference type="PIR" id="A28599">
    <property type="entry name" value="PWBSBM"/>
</dbReference>
<dbReference type="RefSeq" id="WP_013059799.1">
    <property type="nucleotide sequence ID" value="NC_014019.1"/>
</dbReference>
<dbReference type="SMR" id="P12698"/>
<dbReference type="STRING" id="545693.BMQ_5148"/>
<dbReference type="GeneID" id="93645608"/>
<dbReference type="KEGG" id="bmq:BMQ_5148"/>
<dbReference type="eggNOG" id="COG0055">
    <property type="taxonomic scope" value="Bacteria"/>
</dbReference>
<dbReference type="HOGENOM" id="CLU_022398_0_2_9"/>
<dbReference type="Proteomes" id="UP000000935">
    <property type="component" value="Chromosome"/>
</dbReference>
<dbReference type="GO" id="GO:0005886">
    <property type="term" value="C:plasma membrane"/>
    <property type="evidence" value="ECO:0007669"/>
    <property type="project" value="UniProtKB-SubCell"/>
</dbReference>
<dbReference type="GO" id="GO:0045259">
    <property type="term" value="C:proton-transporting ATP synthase complex"/>
    <property type="evidence" value="ECO:0007669"/>
    <property type="project" value="UniProtKB-KW"/>
</dbReference>
<dbReference type="GO" id="GO:0005524">
    <property type="term" value="F:ATP binding"/>
    <property type="evidence" value="ECO:0007669"/>
    <property type="project" value="UniProtKB-UniRule"/>
</dbReference>
<dbReference type="GO" id="GO:0016887">
    <property type="term" value="F:ATP hydrolysis activity"/>
    <property type="evidence" value="ECO:0007669"/>
    <property type="project" value="InterPro"/>
</dbReference>
<dbReference type="GO" id="GO:0046933">
    <property type="term" value="F:proton-transporting ATP synthase activity, rotational mechanism"/>
    <property type="evidence" value="ECO:0007669"/>
    <property type="project" value="UniProtKB-UniRule"/>
</dbReference>
<dbReference type="CDD" id="cd18110">
    <property type="entry name" value="ATP-synt_F1_beta_C"/>
    <property type="match status" value="1"/>
</dbReference>
<dbReference type="CDD" id="cd18115">
    <property type="entry name" value="ATP-synt_F1_beta_N"/>
    <property type="match status" value="1"/>
</dbReference>
<dbReference type="CDD" id="cd01133">
    <property type="entry name" value="F1-ATPase_beta_CD"/>
    <property type="match status" value="1"/>
</dbReference>
<dbReference type="FunFam" id="1.10.1140.10:FF:000001">
    <property type="entry name" value="ATP synthase subunit beta"/>
    <property type="match status" value="1"/>
</dbReference>
<dbReference type="FunFam" id="2.40.10.170:FF:000005">
    <property type="entry name" value="ATP synthase subunit beta"/>
    <property type="match status" value="1"/>
</dbReference>
<dbReference type="FunFam" id="3.40.50.300:FF:000004">
    <property type="entry name" value="ATP synthase subunit beta"/>
    <property type="match status" value="1"/>
</dbReference>
<dbReference type="Gene3D" id="2.40.10.170">
    <property type="match status" value="1"/>
</dbReference>
<dbReference type="Gene3D" id="1.10.1140.10">
    <property type="entry name" value="Bovine Mitochondrial F1-atpase, Atp Synthase Beta Chain, Chain D, domain 3"/>
    <property type="match status" value="1"/>
</dbReference>
<dbReference type="Gene3D" id="3.40.50.300">
    <property type="entry name" value="P-loop containing nucleotide triphosphate hydrolases"/>
    <property type="match status" value="1"/>
</dbReference>
<dbReference type="HAMAP" id="MF_01347">
    <property type="entry name" value="ATP_synth_beta_bact"/>
    <property type="match status" value="1"/>
</dbReference>
<dbReference type="InterPro" id="IPR003593">
    <property type="entry name" value="AAA+_ATPase"/>
</dbReference>
<dbReference type="InterPro" id="IPR055190">
    <property type="entry name" value="ATP-synt_VA_C"/>
</dbReference>
<dbReference type="InterPro" id="IPR005722">
    <property type="entry name" value="ATP_synth_F1_bsu"/>
</dbReference>
<dbReference type="InterPro" id="IPR020003">
    <property type="entry name" value="ATPase_a/bsu_AS"/>
</dbReference>
<dbReference type="InterPro" id="IPR050053">
    <property type="entry name" value="ATPase_alpha/beta_chains"/>
</dbReference>
<dbReference type="InterPro" id="IPR004100">
    <property type="entry name" value="ATPase_F1/V1/A1_a/bsu_N"/>
</dbReference>
<dbReference type="InterPro" id="IPR036121">
    <property type="entry name" value="ATPase_F1/V1/A1_a/bsu_N_sf"/>
</dbReference>
<dbReference type="InterPro" id="IPR000194">
    <property type="entry name" value="ATPase_F1/V1/A1_a/bsu_nucl-bd"/>
</dbReference>
<dbReference type="InterPro" id="IPR024034">
    <property type="entry name" value="ATPase_F1/V1_b/a_C"/>
</dbReference>
<dbReference type="InterPro" id="IPR027417">
    <property type="entry name" value="P-loop_NTPase"/>
</dbReference>
<dbReference type="NCBIfam" id="TIGR01039">
    <property type="entry name" value="atpD"/>
    <property type="match status" value="1"/>
</dbReference>
<dbReference type="PANTHER" id="PTHR15184">
    <property type="entry name" value="ATP SYNTHASE"/>
    <property type="match status" value="1"/>
</dbReference>
<dbReference type="PANTHER" id="PTHR15184:SF71">
    <property type="entry name" value="ATP SYNTHASE SUBUNIT BETA, MITOCHONDRIAL"/>
    <property type="match status" value="1"/>
</dbReference>
<dbReference type="Pfam" id="PF00006">
    <property type="entry name" value="ATP-synt_ab"/>
    <property type="match status" value="1"/>
</dbReference>
<dbReference type="Pfam" id="PF02874">
    <property type="entry name" value="ATP-synt_ab_N"/>
    <property type="match status" value="1"/>
</dbReference>
<dbReference type="Pfam" id="PF22919">
    <property type="entry name" value="ATP-synt_VA_C"/>
    <property type="match status" value="1"/>
</dbReference>
<dbReference type="SMART" id="SM00382">
    <property type="entry name" value="AAA"/>
    <property type="match status" value="1"/>
</dbReference>
<dbReference type="SUPFAM" id="SSF47917">
    <property type="entry name" value="C-terminal domain of alpha and beta subunits of F1 ATP synthase"/>
    <property type="match status" value="1"/>
</dbReference>
<dbReference type="SUPFAM" id="SSF50615">
    <property type="entry name" value="N-terminal domain of alpha and beta subunits of F1 ATP synthase"/>
    <property type="match status" value="1"/>
</dbReference>
<dbReference type="SUPFAM" id="SSF52540">
    <property type="entry name" value="P-loop containing nucleoside triphosphate hydrolases"/>
    <property type="match status" value="1"/>
</dbReference>
<dbReference type="PROSITE" id="PS00152">
    <property type="entry name" value="ATPASE_ALPHA_BETA"/>
    <property type="match status" value="1"/>
</dbReference>
<evidence type="ECO:0000255" key="1">
    <source>
        <dbReference type="HAMAP-Rule" id="MF_01347"/>
    </source>
</evidence>
<evidence type="ECO:0000305" key="2"/>
<feature type="chain" id="PRO_0000144421" description="ATP synthase subunit beta">
    <location>
        <begin position="1"/>
        <end position="473"/>
    </location>
</feature>
<feature type="binding site" evidence="1">
    <location>
        <begin position="158"/>
        <end position="165"/>
    </location>
    <ligand>
        <name>ATP</name>
        <dbReference type="ChEBI" id="CHEBI:30616"/>
    </ligand>
</feature>
<feature type="sequence conflict" description="In Ref. 1; AAA82526." evidence="2" ref="1">
    <original>Q</original>
    <variation>P</variation>
    <location>
        <position position="401"/>
    </location>
</feature>
<feature type="sequence conflict" description="In Ref. 1; AAA82526." evidence="2" ref="1">
    <original>NFH</original>
    <variation>TS</variation>
    <location>
        <begin position="413"/>
        <end position="415"/>
    </location>
</feature>
<organism>
    <name type="scientific">Priestia megaterium (strain ATCC 12872 / QMB1551)</name>
    <name type="common">Bacillus megaterium</name>
    <dbReference type="NCBI Taxonomy" id="545693"/>
    <lineage>
        <taxon>Bacteria</taxon>
        <taxon>Bacillati</taxon>
        <taxon>Bacillota</taxon>
        <taxon>Bacilli</taxon>
        <taxon>Bacillales</taxon>
        <taxon>Bacillaceae</taxon>
        <taxon>Priestia</taxon>
    </lineage>
</organism>
<name>ATPB_PRIM1</name>
<sequence>MTKGRVTQIMGPVVDVKFDNGHLPAIYNALKISHKPSSASEVAIELTLEVAIHLGDNTVRTVAMSSTDGLVRGLEVEDTGAAISVPVGDVTLGRVFNVLGEKIDLDAPIDAGARRDPIHRQAPKFENLSTQAEILETGIKVVDLLAPYIKGGKIGLFGGAGVGKTVLIQELINNIAQEHGGISVFAGVGERTREGNDLYHEMTDSGVIKKTAMVFGQMNEPPGARQRVALTGLTMAEYFRDEQGQDVLFFIDNIFRFTQAGSEVSALLGRMPSAVGYQPTLATEMGQLQERITSTSVGSVTSIQAIYVPADDYTDPAPATTFAHLDATTNLERKLSEMGIYPAVDPLASTSRALSPEIVGEEHYAIARQVQQTLQRYKELQDIIAILGMDELSDEDKLVVQRARRVQFFLSQNFHVAEQFTGQKGSYVPVKETVKGFKEILEGKYDHLPEDAFRLVGRIEEVIENAKRMGVEV</sequence>
<accession>P12698</accession>
<accession>D5DWG1</accession>
<gene>
    <name evidence="1" type="primary">atpD</name>
    <name type="ordered locus">BMQ_5148</name>
</gene>
<reference key="1">
    <citation type="journal article" date="1988" name="Biochem. Biophys. Res. Commun.">
        <title>Sequence of the genes for the beta and epsilon subunits of the ATP synthase of Bacillus megaterium QM B1551.</title>
        <authorList>
            <person name="Hawthorne C.A."/>
            <person name="Brusilow W.S.A."/>
        </authorList>
    </citation>
    <scope>NUCLEOTIDE SEQUENCE [GENOMIC DNA]</scope>
</reference>
<reference key="2">
    <citation type="journal article" date="2011" name="J. Bacteriol.">
        <title>Genome sequences of the biotechnologically important Bacillus megaterium strains QM B1551 and DSM319.</title>
        <authorList>
            <person name="Eppinger M."/>
            <person name="Bunk B."/>
            <person name="Johns M.A."/>
            <person name="Edirisinghe J.N."/>
            <person name="Kutumbaka K.K."/>
            <person name="Koenig S.S."/>
            <person name="Creasy H.H."/>
            <person name="Rosovitz M.J."/>
            <person name="Riley D.R."/>
            <person name="Daugherty S."/>
            <person name="Martin M."/>
            <person name="Elbourne L.D."/>
            <person name="Paulsen I."/>
            <person name="Biedendieck R."/>
            <person name="Braun C."/>
            <person name="Grayburn S."/>
            <person name="Dhingra S."/>
            <person name="Lukyanchuk V."/>
            <person name="Ball B."/>
            <person name="Ul-Qamar R."/>
            <person name="Seibel J."/>
            <person name="Bremer E."/>
            <person name="Jahn D."/>
            <person name="Ravel J."/>
            <person name="Vary P.S."/>
        </authorList>
    </citation>
    <scope>NUCLEOTIDE SEQUENCE [LARGE SCALE GENOMIC DNA]</scope>
    <source>
        <strain>ATCC 12872 / DSM 1804 / QMB1551</strain>
    </source>
</reference>
<keyword id="KW-0066">ATP synthesis</keyword>
<keyword id="KW-0067">ATP-binding</keyword>
<keyword id="KW-1003">Cell membrane</keyword>
<keyword id="KW-0139">CF(1)</keyword>
<keyword id="KW-0375">Hydrogen ion transport</keyword>
<keyword id="KW-0406">Ion transport</keyword>
<keyword id="KW-0472">Membrane</keyword>
<keyword id="KW-0547">Nucleotide-binding</keyword>
<keyword id="KW-1185">Reference proteome</keyword>
<keyword id="KW-1278">Translocase</keyword>
<keyword id="KW-0813">Transport</keyword>
<comment type="function">
    <text evidence="1">Produces ATP from ADP in the presence of a proton gradient across the membrane. The catalytic sites are hosted primarily by the beta subunits.</text>
</comment>
<comment type="catalytic activity">
    <reaction evidence="1">
        <text>ATP + H2O + 4 H(+)(in) = ADP + phosphate + 5 H(+)(out)</text>
        <dbReference type="Rhea" id="RHEA:57720"/>
        <dbReference type="ChEBI" id="CHEBI:15377"/>
        <dbReference type="ChEBI" id="CHEBI:15378"/>
        <dbReference type="ChEBI" id="CHEBI:30616"/>
        <dbReference type="ChEBI" id="CHEBI:43474"/>
        <dbReference type="ChEBI" id="CHEBI:456216"/>
        <dbReference type="EC" id="7.1.2.2"/>
    </reaction>
</comment>
<comment type="subunit">
    <text evidence="1">F-type ATPases have 2 components, CF(1) - the catalytic core - and CF(0) - the membrane proton channel. CF(1) has five subunits: alpha(3), beta(3), gamma(1), delta(1), epsilon(1). CF(0) has three main subunits: a(1), b(2) and c(9-12). The alpha and beta chains form an alternating ring which encloses part of the gamma chain. CF(1) is attached to CF(0) by a central stalk formed by the gamma and epsilon chains, while a peripheral stalk is formed by the delta and b chains.</text>
</comment>
<comment type="subcellular location">
    <subcellularLocation>
        <location evidence="1">Cell membrane</location>
        <topology evidence="1">Peripheral membrane protein</topology>
    </subcellularLocation>
</comment>
<comment type="similarity">
    <text evidence="1">Belongs to the ATPase alpha/beta chains family.</text>
</comment>